<keyword id="KW-0072">Autophagy</keyword>
<keyword id="KW-0968">Cytoplasmic vesicle</keyword>
<keyword id="KW-0256">Endoplasmic reticulum</keyword>
<keyword id="KW-0325">Glycoprotein</keyword>
<keyword id="KW-0333">Golgi apparatus</keyword>
<keyword id="KW-0445">Lipid transport</keyword>
<keyword id="KW-0472">Membrane</keyword>
<keyword id="KW-0597">Phosphoprotein</keyword>
<keyword id="KW-1185">Reference proteome</keyword>
<keyword id="KW-0812">Transmembrane</keyword>
<keyword id="KW-1133">Transmembrane helix</keyword>
<keyword id="KW-0813">Transport</keyword>
<proteinExistence type="inferred from homology"/>
<comment type="function">
    <text evidence="2">Phospholipid scramblase involved in autophagy and cytoplasm to vacuole transport (Cvt) vesicle formation. Cycles between the preautophagosomal structure/phagophore assembly site (PAS) and the cytoplasmic vesicle pool and supplies membrane for the growing autophagosome. Lipid scramblase activity plays a key role in preautophagosomal structure/phagophore assembly by distributing the phospholipids that arrive through ATG2 from the cytoplasmic to the luminal leaflet of the bilayer, thereby driving autophagosomal membrane expansion. Required for mitophagy. Also involved in endoplasmic reticulum-specific autophagic process and is essential for the survival of cells subjected to severe ER stress. Different machineries are required for anterograde trafficking to the PAS during either the Cvt pathway or bulk autophagy and for retrograde trafficking.</text>
</comment>
<comment type="catalytic activity">
    <reaction evidence="2">
        <text>a 1,2-diacyl-sn-glycero-3-phosphocholine(in) = a 1,2-diacyl-sn-glycero-3-phosphocholine(out)</text>
        <dbReference type="Rhea" id="RHEA:38571"/>
        <dbReference type="ChEBI" id="CHEBI:57643"/>
    </reaction>
</comment>
<comment type="catalytic activity">
    <reaction evidence="2">
        <text>a 1,2-diacyl-sn-glycero-3-phospho-L-serine(in) = a 1,2-diacyl-sn-glycero-3-phospho-L-serine(out)</text>
        <dbReference type="Rhea" id="RHEA:38663"/>
        <dbReference type="ChEBI" id="CHEBI:57262"/>
    </reaction>
</comment>
<comment type="catalytic activity">
    <reaction evidence="2">
        <text>a 1,2-diacyl-sn-glycero-3-phosphoethanolamine(in) = a 1,2-diacyl-sn-glycero-3-phosphoethanolamine(out)</text>
        <dbReference type="Rhea" id="RHEA:38895"/>
        <dbReference type="ChEBI" id="CHEBI:64612"/>
    </reaction>
</comment>
<comment type="catalytic activity">
    <reaction evidence="2">
        <text>a 1,2-diacyl-sn-glycero-3-phospho-(1D-myo-inositol-3-phosphate)(in) = a 1,2-diacyl-sn-glycero-3-phospho-(1D-myo-inositol-3-phosphate)(out)</text>
        <dbReference type="Rhea" id="RHEA:67920"/>
        <dbReference type="ChEBI" id="CHEBI:58088"/>
    </reaction>
</comment>
<comment type="subunit">
    <text evidence="1">Homotrimer; forms a homotrimer with a central pore that forms a path between the two membrane leaflets.</text>
</comment>
<comment type="subcellular location">
    <subcellularLocation>
        <location evidence="2">Preautophagosomal structure membrane</location>
        <topology evidence="2">Multi-pass membrane protein</topology>
    </subcellularLocation>
    <subcellularLocation>
        <location evidence="2">Cytoplasmic vesicle membrane</location>
        <topology evidence="2">Multi-pass membrane protein</topology>
    </subcellularLocation>
    <subcellularLocation>
        <location evidence="2">Golgi apparatus membrane</location>
        <topology evidence="2">Multi-pass membrane protein</topology>
    </subcellularLocation>
    <subcellularLocation>
        <location evidence="2">Endoplasmic reticulum membrane</location>
        <topology evidence="2">Multi-pass membrane protein</topology>
    </subcellularLocation>
</comment>
<comment type="domain">
    <text evidence="1">Forms a homotrimer with a solvated central pore, which is connected laterally to the cytosol through the cavity within each protomer. Acts as a lipid scramblase that uses its central pore to function: the central pore opens laterally to accommodate lipid headgroups, thereby enabling lipid flipping and redistribution of lipids added to the outer leaflet of ATG9-containing vesicles, thereby enabling growth into autophagosomes.</text>
</comment>
<comment type="PTM">
    <text evidence="2">Phosphorylated by ATG1. ATG1 phosphorylation is required for preautophagosome elongation.</text>
</comment>
<comment type="similarity">
    <text evidence="5">Belongs to the ATG9 family.</text>
</comment>
<protein>
    <recommendedName>
        <fullName>Autophagy-related protein 9</fullName>
    </recommendedName>
</protein>
<accession>Q6FQT7</accession>
<sequence>MEQSGHEPGKNTFLSRVFGLQSDDVSTSIHTQELSTIPLDEDESNHGALVESEDDEDHNDGVRLLESDPGTSTQDSLESDTSEEDERINGINSDSQVIDTSRPLLSKKETMELHPFGSQNGRIMESSIKLGQPSSDEEDLINVNESLQPDLENRINPIYHEDKLDKALGNSSKNIRTSTFLDRVLKPNDVKKNSTKKRQNSHNYNPTSTYTNSSSNTFLNTVKGEKSSKKYKLKRPNILNALSVVNNMPERRLNTLSPKERALWKWANVDNLDLFLQDAYNYYLGNGFHCIILQKVLNILTLLFVVFVSSFMGYCVDYSKLPTSTRFSEIKIDHCYSQNITGFTKFLLFLFYGFVILKVIQLYFDINNIREMKLFYHYLLNISDDELQTIPWQNIIQQLMYLKDQNALTANVVAVKAKNKLNAHGIANRIMRKENYLIALYNNDILDLRFPIPFFGSQPLTKTLEWNINLCVMGYVFNEAGFIKQGFLKATQKEYFANELRKRFMLAGFLNIILSPFLVSYFVLLYFFRYFNEYKTSPENIGARQYTPMAEWKFREYNELYHIFRKRIGLSNPLASKYVDQFPKEKTNILLKFVSFISGSFVAILAILALWDPENFLNFEVTHDKTVLFYITVLGAIWSISQGSVSTEYHVFDPEETLRELAEYTHYLPDSWKDRYHTEGVKQEFCELYNLRITVLLRELASLITTPFILWFSLPNSAGKMVDFFRESSVYVDGLGYVCKYAVYDGDADAVKKHFGTDGNETTEQDAATEEQDIDSEPDEATKKMMQSYMYFLDDYENDDNLLGKYQIPKKRRESFDNTQYDVSNSNQKNQDDDSDMILANRYTWRKQFKPGQKPELFRIGNHVLNDKTFTQQGSNHLGIDESYARSQISNTAEESNRSSLYNSKYKSPTKGVLGLVKEYYKKSDVGR</sequence>
<dbReference type="EMBL" id="CR380955">
    <property type="protein sequence ID" value="CAG60344.1"/>
    <property type="molecule type" value="Genomic_DNA"/>
</dbReference>
<dbReference type="RefSeq" id="XP_447407.1">
    <property type="nucleotide sequence ID" value="XM_447407.1"/>
</dbReference>
<dbReference type="SMR" id="Q6FQT7"/>
<dbReference type="FunCoup" id="Q6FQT7">
    <property type="interactions" value="275"/>
</dbReference>
<dbReference type="STRING" id="284593.Q6FQT7"/>
<dbReference type="GlyCosmos" id="Q6FQT7">
    <property type="glycosylation" value="1 site, No reported glycans"/>
</dbReference>
<dbReference type="EnsemblFungi" id="CAGL0I03652g-T">
    <property type="protein sequence ID" value="CAGL0I03652g-T-p1"/>
    <property type="gene ID" value="CAGL0I03652g"/>
</dbReference>
<dbReference type="KEGG" id="cgr:2889146"/>
<dbReference type="CGD" id="CAL0132556">
    <property type="gene designation" value="CAGL0I03652g"/>
</dbReference>
<dbReference type="VEuPathDB" id="FungiDB:CAGL0I03652g"/>
<dbReference type="eggNOG" id="KOG2173">
    <property type="taxonomic scope" value="Eukaryota"/>
</dbReference>
<dbReference type="HOGENOM" id="CLU_006200_1_0_1"/>
<dbReference type="InParanoid" id="Q6FQT7"/>
<dbReference type="OMA" id="IAEWKFR"/>
<dbReference type="Proteomes" id="UP000002428">
    <property type="component" value="Chromosome I"/>
</dbReference>
<dbReference type="GO" id="GO:0005776">
    <property type="term" value="C:autophagosome"/>
    <property type="evidence" value="ECO:0007669"/>
    <property type="project" value="TreeGrafter"/>
</dbReference>
<dbReference type="GO" id="GO:0030659">
    <property type="term" value="C:cytoplasmic vesicle membrane"/>
    <property type="evidence" value="ECO:0007669"/>
    <property type="project" value="UniProtKB-SubCell"/>
</dbReference>
<dbReference type="GO" id="GO:0005789">
    <property type="term" value="C:endoplasmic reticulum membrane"/>
    <property type="evidence" value="ECO:0007669"/>
    <property type="project" value="UniProtKB-SubCell"/>
</dbReference>
<dbReference type="GO" id="GO:0000139">
    <property type="term" value="C:Golgi membrane"/>
    <property type="evidence" value="ECO:0007669"/>
    <property type="project" value="UniProtKB-SubCell"/>
</dbReference>
<dbReference type="GO" id="GO:0005739">
    <property type="term" value="C:mitochondrion"/>
    <property type="evidence" value="ECO:0007669"/>
    <property type="project" value="EnsemblFungi"/>
</dbReference>
<dbReference type="GO" id="GO:0061908">
    <property type="term" value="C:phagophore"/>
    <property type="evidence" value="ECO:0007669"/>
    <property type="project" value="EnsemblFungi"/>
</dbReference>
<dbReference type="GO" id="GO:0034045">
    <property type="term" value="C:phagophore assembly site membrane"/>
    <property type="evidence" value="ECO:0007669"/>
    <property type="project" value="UniProtKB-SubCell"/>
</dbReference>
<dbReference type="GO" id="GO:0017128">
    <property type="term" value="F:phospholipid scramblase activity"/>
    <property type="evidence" value="ECO:0007669"/>
    <property type="project" value="EnsemblFungi"/>
</dbReference>
<dbReference type="GO" id="GO:0032258">
    <property type="term" value="P:cytoplasm to vacuole targeting by the Cvt pathway"/>
    <property type="evidence" value="ECO:0007669"/>
    <property type="project" value="EnsemblFungi"/>
</dbReference>
<dbReference type="GO" id="GO:0000423">
    <property type="term" value="P:mitophagy"/>
    <property type="evidence" value="ECO:0007669"/>
    <property type="project" value="EnsemblFungi"/>
</dbReference>
<dbReference type="GO" id="GO:0034727">
    <property type="term" value="P:piecemeal microautophagy of the nucleus"/>
    <property type="evidence" value="ECO:0007669"/>
    <property type="project" value="EnsemblFungi"/>
</dbReference>
<dbReference type="GO" id="GO:0034497">
    <property type="term" value="P:protein localization to phagophore assembly site"/>
    <property type="evidence" value="ECO:0007669"/>
    <property type="project" value="EnsemblFungi"/>
</dbReference>
<dbReference type="GO" id="GO:0061709">
    <property type="term" value="P:reticulophagy"/>
    <property type="evidence" value="ECO:0007669"/>
    <property type="project" value="EnsemblFungi"/>
</dbReference>
<dbReference type="InterPro" id="IPR007241">
    <property type="entry name" value="Autophagy-rel_prot_9"/>
</dbReference>
<dbReference type="PANTHER" id="PTHR13038">
    <property type="entry name" value="APG9 AUTOPHAGY 9"/>
    <property type="match status" value="1"/>
</dbReference>
<dbReference type="PANTHER" id="PTHR13038:SF10">
    <property type="entry name" value="AUTOPHAGY-RELATED PROTEIN 9"/>
    <property type="match status" value="1"/>
</dbReference>
<dbReference type="Pfam" id="PF04109">
    <property type="entry name" value="ATG9"/>
    <property type="match status" value="1"/>
</dbReference>
<name>ATG9_CANGA</name>
<evidence type="ECO:0000250" key="1">
    <source>
        <dbReference type="UniProtKB" id="O74312"/>
    </source>
</evidence>
<evidence type="ECO:0000250" key="2">
    <source>
        <dbReference type="UniProtKB" id="Q12142"/>
    </source>
</evidence>
<evidence type="ECO:0000255" key="3"/>
<evidence type="ECO:0000256" key="4">
    <source>
        <dbReference type="SAM" id="MobiDB-lite"/>
    </source>
</evidence>
<evidence type="ECO:0000305" key="5"/>
<gene>
    <name type="primary">ATG9</name>
    <name type="ordered locus">CAGL0I03652g</name>
</gene>
<reference key="1">
    <citation type="journal article" date="2004" name="Nature">
        <title>Genome evolution in yeasts.</title>
        <authorList>
            <person name="Dujon B."/>
            <person name="Sherman D."/>
            <person name="Fischer G."/>
            <person name="Durrens P."/>
            <person name="Casaregola S."/>
            <person name="Lafontaine I."/>
            <person name="de Montigny J."/>
            <person name="Marck C."/>
            <person name="Neuveglise C."/>
            <person name="Talla E."/>
            <person name="Goffard N."/>
            <person name="Frangeul L."/>
            <person name="Aigle M."/>
            <person name="Anthouard V."/>
            <person name="Babour A."/>
            <person name="Barbe V."/>
            <person name="Barnay S."/>
            <person name="Blanchin S."/>
            <person name="Beckerich J.-M."/>
            <person name="Beyne E."/>
            <person name="Bleykasten C."/>
            <person name="Boisrame A."/>
            <person name="Boyer J."/>
            <person name="Cattolico L."/>
            <person name="Confanioleri F."/>
            <person name="de Daruvar A."/>
            <person name="Despons L."/>
            <person name="Fabre E."/>
            <person name="Fairhead C."/>
            <person name="Ferry-Dumazet H."/>
            <person name="Groppi A."/>
            <person name="Hantraye F."/>
            <person name="Hennequin C."/>
            <person name="Jauniaux N."/>
            <person name="Joyet P."/>
            <person name="Kachouri R."/>
            <person name="Kerrest A."/>
            <person name="Koszul R."/>
            <person name="Lemaire M."/>
            <person name="Lesur I."/>
            <person name="Ma L."/>
            <person name="Muller H."/>
            <person name="Nicaud J.-M."/>
            <person name="Nikolski M."/>
            <person name="Oztas S."/>
            <person name="Ozier-Kalogeropoulos O."/>
            <person name="Pellenz S."/>
            <person name="Potier S."/>
            <person name="Richard G.-F."/>
            <person name="Straub M.-L."/>
            <person name="Suleau A."/>
            <person name="Swennen D."/>
            <person name="Tekaia F."/>
            <person name="Wesolowski-Louvel M."/>
            <person name="Westhof E."/>
            <person name="Wirth B."/>
            <person name="Zeniou-Meyer M."/>
            <person name="Zivanovic Y."/>
            <person name="Bolotin-Fukuhara M."/>
            <person name="Thierry A."/>
            <person name="Bouchier C."/>
            <person name="Caudron B."/>
            <person name="Scarpelli C."/>
            <person name="Gaillardin C."/>
            <person name="Weissenbach J."/>
            <person name="Wincker P."/>
            <person name="Souciet J.-L."/>
        </authorList>
    </citation>
    <scope>NUCLEOTIDE SEQUENCE [LARGE SCALE GENOMIC DNA]</scope>
    <source>
        <strain>ATCC 2001 / BCRC 20586 / JCM 3761 / NBRC 0622 / NRRL Y-65 / CBS 138</strain>
    </source>
</reference>
<organism>
    <name type="scientific">Candida glabrata (strain ATCC 2001 / BCRC 20586 / JCM 3761 / NBRC 0622 / NRRL Y-65 / CBS 138)</name>
    <name type="common">Yeast</name>
    <name type="synonym">Nakaseomyces glabratus</name>
    <dbReference type="NCBI Taxonomy" id="284593"/>
    <lineage>
        <taxon>Eukaryota</taxon>
        <taxon>Fungi</taxon>
        <taxon>Dikarya</taxon>
        <taxon>Ascomycota</taxon>
        <taxon>Saccharomycotina</taxon>
        <taxon>Saccharomycetes</taxon>
        <taxon>Saccharomycetales</taxon>
        <taxon>Saccharomycetaceae</taxon>
        <taxon>Nakaseomyces</taxon>
    </lineage>
</organism>
<feature type="chain" id="PRO_0000119827" description="Autophagy-related protein 9">
    <location>
        <begin position="1"/>
        <end position="928"/>
    </location>
</feature>
<feature type="topological domain" description="Cytoplasmic" evidence="5">
    <location>
        <begin position="1"/>
        <end position="295"/>
    </location>
</feature>
<feature type="transmembrane region" description="Helical" evidence="3">
    <location>
        <begin position="296"/>
        <end position="316"/>
    </location>
</feature>
<feature type="topological domain" description="Lumenal" evidence="5">
    <location>
        <begin position="317"/>
        <end position="345"/>
    </location>
</feature>
<feature type="transmembrane region" description="Helical" evidence="3">
    <location>
        <begin position="346"/>
        <end position="366"/>
    </location>
</feature>
<feature type="topological domain" description="Cytoplasmic" evidence="5">
    <location>
        <begin position="367"/>
        <end position="507"/>
    </location>
</feature>
<feature type="intramembrane region" evidence="1">
    <location>
        <begin position="508"/>
        <end position="528"/>
    </location>
</feature>
<feature type="topological domain" description="Cytoplasmic" evidence="5">
    <location>
        <begin position="529"/>
        <end position="588"/>
    </location>
</feature>
<feature type="transmembrane region" description="Helical" evidence="3">
    <location>
        <begin position="589"/>
        <end position="609"/>
    </location>
</feature>
<feature type="topological domain" description="Lumenal" evidence="5">
    <location>
        <begin position="610"/>
        <end position="625"/>
    </location>
</feature>
<feature type="transmembrane region" description="Helical" evidence="3">
    <location>
        <begin position="626"/>
        <end position="646"/>
    </location>
</feature>
<feature type="topological domain" description="Cytoplasmic" evidence="5">
    <location>
        <begin position="647"/>
        <end position="692"/>
    </location>
</feature>
<feature type="intramembrane region" evidence="1">
    <location>
        <begin position="693"/>
        <end position="713"/>
    </location>
</feature>
<feature type="topological domain" description="Cytoplasmic" evidence="5">
    <location>
        <begin position="714"/>
        <end position="928"/>
    </location>
</feature>
<feature type="region of interest" description="Disordered" evidence="4">
    <location>
        <begin position="28"/>
        <end position="118"/>
    </location>
</feature>
<feature type="region of interest" description="Disordered" evidence="4">
    <location>
        <begin position="188"/>
        <end position="216"/>
    </location>
</feature>
<feature type="region of interest" description="Disordered" evidence="4">
    <location>
        <begin position="755"/>
        <end position="779"/>
    </location>
</feature>
<feature type="compositionally biased region" description="Acidic residues" evidence="4">
    <location>
        <begin position="77"/>
        <end position="86"/>
    </location>
</feature>
<feature type="compositionally biased region" description="Polar residues" evidence="4">
    <location>
        <begin position="90"/>
        <end position="99"/>
    </location>
</feature>
<feature type="compositionally biased region" description="Low complexity" evidence="4">
    <location>
        <begin position="201"/>
        <end position="216"/>
    </location>
</feature>
<feature type="compositionally biased region" description="Acidic residues" evidence="4">
    <location>
        <begin position="761"/>
        <end position="779"/>
    </location>
</feature>
<feature type="glycosylation site" description="N-linked (GlcNAc...) asparagine" evidence="3">
    <location>
        <position position="339"/>
    </location>
</feature>